<accession>Q3AWG6</accession>
<dbReference type="EC" id="4.2.1.10" evidence="1"/>
<dbReference type="EMBL" id="CP000097">
    <property type="protein sequence ID" value="ABB26790.1"/>
    <property type="molecule type" value="Genomic_DNA"/>
</dbReference>
<dbReference type="RefSeq" id="WP_011360594.1">
    <property type="nucleotide sequence ID" value="NC_007513.1"/>
</dbReference>
<dbReference type="SMR" id="Q3AWG6"/>
<dbReference type="STRING" id="316279.Syncc9902_1833"/>
<dbReference type="KEGG" id="sye:Syncc9902_1833"/>
<dbReference type="eggNOG" id="COG0757">
    <property type="taxonomic scope" value="Bacteria"/>
</dbReference>
<dbReference type="HOGENOM" id="CLU_090968_1_0_3"/>
<dbReference type="OrthoDB" id="9790793at2"/>
<dbReference type="UniPathway" id="UPA00053">
    <property type="reaction ID" value="UER00086"/>
</dbReference>
<dbReference type="Proteomes" id="UP000002712">
    <property type="component" value="Chromosome"/>
</dbReference>
<dbReference type="GO" id="GO:0003855">
    <property type="term" value="F:3-dehydroquinate dehydratase activity"/>
    <property type="evidence" value="ECO:0007669"/>
    <property type="project" value="UniProtKB-UniRule"/>
</dbReference>
<dbReference type="GO" id="GO:0008652">
    <property type="term" value="P:amino acid biosynthetic process"/>
    <property type="evidence" value="ECO:0007669"/>
    <property type="project" value="UniProtKB-KW"/>
</dbReference>
<dbReference type="GO" id="GO:0009073">
    <property type="term" value="P:aromatic amino acid family biosynthetic process"/>
    <property type="evidence" value="ECO:0007669"/>
    <property type="project" value="UniProtKB-KW"/>
</dbReference>
<dbReference type="GO" id="GO:0009423">
    <property type="term" value="P:chorismate biosynthetic process"/>
    <property type="evidence" value="ECO:0007669"/>
    <property type="project" value="UniProtKB-UniRule"/>
</dbReference>
<dbReference type="GO" id="GO:0019631">
    <property type="term" value="P:quinate catabolic process"/>
    <property type="evidence" value="ECO:0007669"/>
    <property type="project" value="TreeGrafter"/>
</dbReference>
<dbReference type="CDD" id="cd00466">
    <property type="entry name" value="DHQase_II"/>
    <property type="match status" value="1"/>
</dbReference>
<dbReference type="Gene3D" id="3.40.50.9100">
    <property type="entry name" value="Dehydroquinase, class II"/>
    <property type="match status" value="1"/>
</dbReference>
<dbReference type="HAMAP" id="MF_00169">
    <property type="entry name" value="AroQ"/>
    <property type="match status" value="1"/>
</dbReference>
<dbReference type="InterPro" id="IPR001874">
    <property type="entry name" value="DHquinase_II"/>
</dbReference>
<dbReference type="InterPro" id="IPR018509">
    <property type="entry name" value="DHquinase_II_CS"/>
</dbReference>
<dbReference type="InterPro" id="IPR036441">
    <property type="entry name" value="DHquinase_II_sf"/>
</dbReference>
<dbReference type="NCBIfam" id="TIGR01088">
    <property type="entry name" value="aroQ"/>
    <property type="match status" value="1"/>
</dbReference>
<dbReference type="NCBIfam" id="NF003804">
    <property type="entry name" value="PRK05395.1-1"/>
    <property type="match status" value="1"/>
</dbReference>
<dbReference type="NCBIfam" id="NF003805">
    <property type="entry name" value="PRK05395.1-2"/>
    <property type="match status" value="1"/>
</dbReference>
<dbReference type="NCBIfam" id="NF003806">
    <property type="entry name" value="PRK05395.1-3"/>
    <property type="match status" value="1"/>
</dbReference>
<dbReference type="NCBIfam" id="NF003807">
    <property type="entry name" value="PRK05395.1-4"/>
    <property type="match status" value="1"/>
</dbReference>
<dbReference type="PANTHER" id="PTHR21272">
    <property type="entry name" value="CATABOLIC 3-DEHYDROQUINASE"/>
    <property type="match status" value="1"/>
</dbReference>
<dbReference type="PANTHER" id="PTHR21272:SF3">
    <property type="entry name" value="CATABOLIC 3-DEHYDROQUINASE"/>
    <property type="match status" value="1"/>
</dbReference>
<dbReference type="Pfam" id="PF01220">
    <property type="entry name" value="DHquinase_II"/>
    <property type="match status" value="1"/>
</dbReference>
<dbReference type="PIRSF" id="PIRSF001399">
    <property type="entry name" value="DHquinase_II"/>
    <property type="match status" value="1"/>
</dbReference>
<dbReference type="SUPFAM" id="SSF52304">
    <property type="entry name" value="Type II 3-dehydroquinate dehydratase"/>
    <property type="match status" value="1"/>
</dbReference>
<dbReference type="PROSITE" id="PS01029">
    <property type="entry name" value="DEHYDROQUINASE_II"/>
    <property type="match status" value="1"/>
</dbReference>
<sequence>MHVLLLNGPNLNLLGQREPGIYGCDTLATIETELTREAKADGVELVCFQSNFEGALIERIHQAMGESQGILINAGAYTHSSIAIRDALTGVAIPYVELHLSNTHAREPFRHQSYLAGRAVGVVSGFGAKSYSLALSGLVHHLRQGG</sequence>
<proteinExistence type="inferred from homology"/>
<name>AROQ_SYNS9</name>
<gene>
    <name evidence="1" type="primary">aroQ</name>
    <name type="ordered locus">Syncc9902_1833</name>
</gene>
<protein>
    <recommendedName>
        <fullName evidence="1">3-dehydroquinate dehydratase</fullName>
        <shortName evidence="1">3-dehydroquinase</shortName>
        <ecNumber evidence="1">4.2.1.10</ecNumber>
    </recommendedName>
    <alternativeName>
        <fullName evidence="1">Type II DHQase</fullName>
    </alternativeName>
</protein>
<evidence type="ECO:0000255" key="1">
    <source>
        <dbReference type="HAMAP-Rule" id="MF_00169"/>
    </source>
</evidence>
<feature type="chain" id="PRO_1000023525" description="3-dehydroquinate dehydratase">
    <location>
        <begin position="1"/>
        <end position="146"/>
    </location>
</feature>
<feature type="active site" description="Proton acceptor" evidence="1">
    <location>
        <position position="22"/>
    </location>
</feature>
<feature type="active site" description="Proton donor" evidence="1">
    <location>
        <position position="99"/>
    </location>
</feature>
<feature type="binding site" evidence="1">
    <location>
        <position position="73"/>
    </location>
    <ligand>
        <name>substrate</name>
    </ligand>
</feature>
<feature type="binding site" evidence="1">
    <location>
        <position position="79"/>
    </location>
    <ligand>
        <name>substrate</name>
    </ligand>
</feature>
<feature type="binding site" evidence="1">
    <location>
        <position position="86"/>
    </location>
    <ligand>
        <name>substrate</name>
    </ligand>
</feature>
<feature type="binding site" evidence="1">
    <location>
        <begin position="100"/>
        <end position="101"/>
    </location>
    <ligand>
        <name>substrate</name>
    </ligand>
</feature>
<feature type="binding site" evidence="1">
    <location>
        <position position="110"/>
    </location>
    <ligand>
        <name>substrate</name>
    </ligand>
</feature>
<feature type="site" description="Transition state stabilizer" evidence="1">
    <location>
        <position position="17"/>
    </location>
</feature>
<reference key="1">
    <citation type="submission" date="2005-08" db="EMBL/GenBank/DDBJ databases">
        <title>Complete sequence of Synechococcus sp. CC9902.</title>
        <authorList>
            <person name="Copeland A."/>
            <person name="Lucas S."/>
            <person name="Lapidus A."/>
            <person name="Barry K."/>
            <person name="Detter J.C."/>
            <person name="Glavina T."/>
            <person name="Hammon N."/>
            <person name="Israni S."/>
            <person name="Pitluck S."/>
            <person name="Martinez M."/>
            <person name="Schmutz J."/>
            <person name="Larimer F."/>
            <person name="Land M."/>
            <person name="Kyrpides N."/>
            <person name="Ivanova N."/>
            <person name="Richardson P."/>
        </authorList>
    </citation>
    <scope>NUCLEOTIDE SEQUENCE [LARGE SCALE GENOMIC DNA]</scope>
    <source>
        <strain>CC9902</strain>
    </source>
</reference>
<organism>
    <name type="scientific">Synechococcus sp. (strain CC9902)</name>
    <dbReference type="NCBI Taxonomy" id="316279"/>
    <lineage>
        <taxon>Bacteria</taxon>
        <taxon>Bacillati</taxon>
        <taxon>Cyanobacteriota</taxon>
        <taxon>Cyanophyceae</taxon>
        <taxon>Synechococcales</taxon>
        <taxon>Synechococcaceae</taxon>
        <taxon>Synechococcus</taxon>
    </lineage>
</organism>
<keyword id="KW-0028">Amino-acid biosynthesis</keyword>
<keyword id="KW-0057">Aromatic amino acid biosynthesis</keyword>
<keyword id="KW-0456">Lyase</keyword>
<keyword id="KW-1185">Reference proteome</keyword>
<comment type="function">
    <text evidence="1">Catalyzes a trans-dehydration via an enolate intermediate.</text>
</comment>
<comment type="catalytic activity">
    <reaction evidence="1">
        <text>3-dehydroquinate = 3-dehydroshikimate + H2O</text>
        <dbReference type="Rhea" id="RHEA:21096"/>
        <dbReference type="ChEBI" id="CHEBI:15377"/>
        <dbReference type="ChEBI" id="CHEBI:16630"/>
        <dbReference type="ChEBI" id="CHEBI:32364"/>
        <dbReference type="EC" id="4.2.1.10"/>
    </reaction>
</comment>
<comment type="pathway">
    <text evidence="1">Metabolic intermediate biosynthesis; chorismate biosynthesis; chorismate from D-erythrose 4-phosphate and phosphoenolpyruvate: step 3/7.</text>
</comment>
<comment type="subunit">
    <text evidence="1">Homododecamer.</text>
</comment>
<comment type="similarity">
    <text evidence="1">Belongs to the type-II 3-dehydroquinase family.</text>
</comment>